<keyword id="KW-0963">Cytoplasm</keyword>
<keyword id="KW-0324">Glycolysis</keyword>
<keyword id="KW-0456">Lyase</keyword>
<keyword id="KW-0460">Magnesium</keyword>
<keyword id="KW-0479">Metal-binding</keyword>
<keyword id="KW-1185">Reference proteome</keyword>
<keyword id="KW-0964">Secreted</keyword>
<proteinExistence type="inferred from homology"/>
<protein>
    <recommendedName>
        <fullName evidence="1">Enolase</fullName>
        <ecNumber evidence="1">4.2.1.11</ecNumber>
    </recommendedName>
    <alternativeName>
        <fullName evidence="1">2-phospho-D-glycerate hydro-lyase</fullName>
    </alternativeName>
    <alternativeName>
        <fullName evidence="1">2-phosphoglycerate dehydratase</fullName>
    </alternativeName>
</protein>
<sequence>MIDSLDLVIDSIFAREVLDSRGNPTVEAEVLLEGGAKGRAIVPSGASTGAYEAHELRDGGTRYMGKGVLRVVEHIEDRIAPSLCGLSASDQVNVDQIMRELDGTENKENLGANAILAVSIATARSAANAFGMPLYRYLGNPMSSLLPVPLMNVINGGAHAANNLDFQEFMLVPHGAESFREALRMGAEVFHTLKKLLSDKGLSTAVGDEGGFAPDLENNNAAGDLLVQAIEKAGFRPGEEISLALDVASTEFFKNGLYHFGEGKFSSEKMVEELKKLVNLYPIISIEDGLSEDDWSGWELLTKELGNKVQLVGDDLFVTNTKRLRQGIDRSIANSILIKVNQIGTLTETLEAIDLSHRMGYTSIISHRSGETEDTTIADLAVATRAGQIKTGSLSRSERVAKYNQLLRIEDQLGAQAVYAGSVGLGPRGLSK</sequence>
<name>ENO_PROMA</name>
<dbReference type="EC" id="4.2.1.11" evidence="1"/>
<dbReference type="EMBL" id="AE017126">
    <property type="protein sequence ID" value="AAP99281.1"/>
    <property type="molecule type" value="Genomic_DNA"/>
</dbReference>
<dbReference type="RefSeq" id="NP_874629.1">
    <property type="nucleotide sequence ID" value="NC_005042.1"/>
</dbReference>
<dbReference type="RefSeq" id="WP_011124390.1">
    <property type="nucleotide sequence ID" value="NC_005042.1"/>
</dbReference>
<dbReference type="SMR" id="Q7VDY0"/>
<dbReference type="STRING" id="167539.Pro_0235"/>
<dbReference type="EnsemblBacteria" id="AAP99281">
    <property type="protein sequence ID" value="AAP99281"/>
    <property type="gene ID" value="Pro_0235"/>
</dbReference>
<dbReference type="KEGG" id="pma:Pro_0235"/>
<dbReference type="PATRIC" id="fig|167539.5.peg.243"/>
<dbReference type="eggNOG" id="COG0148">
    <property type="taxonomic scope" value="Bacteria"/>
</dbReference>
<dbReference type="HOGENOM" id="CLU_031223_2_1_3"/>
<dbReference type="OrthoDB" id="9804716at2"/>
<dbReference type="UniPathway" id="UPA00109">
    <property type="reaction ID" value="UER00187"/>
</dbReference>
<dbReference type="Proteomes" id="UP000001420">
    <property type="component" value="Chromosome"/>
</dbReference>
<dbReference type="GO" id="GO:0009986">
    <property type="term" value="C:cell surface"/>
    <property type="evidence" value="ECO:0007669"/>
    <property type="project" value="UniProtKB-SubCell"/>
</dbReference>
<dbReference type="GO" id="GO:0005576">
    <property type="term" value="C:extracellular region"/>
    <property type="evidence" value="ECO:0007669"/>
    <property type="project" value="UniProtKB-SubCell"/>
</dbReference>
<dbReference type="GO" id="GO:0000015">
    <property type="term" value="C:phosphopyruvate hydratase complex"/>
    <property type="evidence" value="ECO:0007669"/>
    <property type="project" value="InterPro"/>
</dbReference>
<dbReference type="GO" id="GO:0000287">
    <property type="term" value="F:magnesium ion binding"/>
    <property type="evidence" value="ECO:0007669"/>
    <property type="project" value="UniProtKB-UniRule"/>
</dbReference>
<dbReference type="GO" id="GO:0004634">
    <property type="term" value="F:phosphopyruvate hydratase activity"/>
    <property type="evidence" value="ECO:0007669"/>
    <property type="project" value="UniProtKB-UniRule"/>
</dbReference>
<dbReference type="GO" id="GO:0006096">
    <property type="term" value="P:glycolytic process"/>
    <property type="evidence" value="ECO:0007669"/>
    <property type="project" value="UniProtKB-UniRule"/>
</dbReference>
<dbReference type="CDD" id="cd03313">
    <property type="entry name" value="enolase"/>
    <property type="match status" value="1"/>
</dbReference>
<dbReference type="FunFam" id="3.20.20.120:FF:000001">
    <property type="entry name" value="Enolase"/>
    <property type="match status" value="1"/>
</dbReference>
<dbReference type="FunFam" id="3.30.390.10:FF:000001">
    <property type="entry name" value="Enolase"/>
    <property type="match status" value="1"/>
</dbReference>
<dbReference type="Gene3D" id="3.20.20.120">
    <property type="entry name" value="Enolase-like C-terminal domain"/>
    <property type="match status" value="1"/>
</dbReference>
<dbReference type="Gene3D" id="3.30.390.10">
    <property type="entry name" value="Enolase-like, N-terminal domain"/>
    <property type="match status" value="1"/>
</dbReference>
<dbReference type="HAMAP" id="MF_00318">
    <property type="entry name" value="Enolase"/>
    <property type="match status" value="1"/>
</dbReference>
<dbReference type="InterPro" id="IPR000941">
    <property type="entry name" value="Enolase"/>
</dbReference>
<dbReference type="InterPro" id="IPR036849">
    <property type="entry name" value="Enolase-like_C_sf"/>
</dbReference>
<dbReference type="InterPro" id="IPR029017">
    <property type="entry name" value="Enolase-like_N"/>
</dbReference>
<dbReference type="InterPro" id="IPR020810">
    <property type="entry name" value="Enolase_C"/>
</dbReference>
<dbReference type="InterPro" id="IPR020809">
    <property type="entry name" value="Enolase_CS"/>
</dbReference>
<dbReference type="InterPro" id="IPR020811">
    <property type="entry name" value="Enolase_N"/>
</dbReference>
<dbReference type="NCBIfam" id="TIGR01060">
    <property type="entry name" value="eno"/>
    <property type="match status" value="1"/>
</dbReference>
<dbReference type="PANTHER" id="PTHR11902">
    <property type="entry name" value="ENOLASE"/>
    <property type="match status" value="1"/>
</dbReference>
<dbReference type="PANTHER" id="PTHR11902:SF1">
    <property type="entry name" value="ENOLASE"/>
    <property type="match status" value="1"/>
</dbReference>
<dbReference type="Pfam" id="PF00113">
    <property type="entry name" value="Enolase_C"/>
    <property type="match status" value="1"/>
</dbReference>
<dbReference type="Pfam" id="PF03952">
    <property type="entry name" value="Enolase_N"/>
    <property type="match status" value="1"/>
</dbReference>
<dbReference type="PIRSF" id="PIRSF001400">
    <property type="entry name" value="Enolase"/>
    <property type="match status" value="1"/>
</dbReference>
<dbReference type="PRINTS" id="PR00148">
    <property type="entry name" value="ENOLASE"/>
</dbReference>
<dbReference type="SFLD" id="SFLDS00001">
    <property type="entry name" value="Enolase"/>
    <property type="match status" value="1"/>
</dbReference>
<dbReference type="SFLD" id="SFLDF00002">
    <property type="entry name" value="enolase"/>
    <property type="match status" value="1"/>
</dbReference>
<dbReference type="SMART" id="SM01192">
    <property type="entry name" value="Enolase_C"/>
    <property type="match status" value="1"/>
</dbReference>
<dbReference type="SMART" id="SM01193">
    <property type="entry name" value="Enolase_N"/>
    <property type="match status" value="1"/>
</dbReference>
<dbReference type="SUPFAM" id="SSF51604">
    <property type="entry name" value="Enolase C-terminal domain-like"/>
    <property type="match status" value="1"/>
</dbReference>
<dbReference type="SUPFAM" id="SSF54826">
    <property type="entry name" value="Enolase N-terminal domain-like"/>
    <property type="match status" value="1"/>
</dbReference>
<dbReference type="PROSITE" id="PS00164">
    <property type="entry name" value="ENOLASE"/>
    <property type="match status" value="1"/>
</dbReference>
<gene>
    <name evidence="1" type="primary">eno</name>
    <name type="ordered locus">Pro_0235</name>
</gene>
<comment type="function">
    <text evidence="1">Catalyzes the reversible conversion of 2-phosphoglycerate (2-PG) into phosphoenolpyruvate (PEP). It is essential for the degradation of carbohydrates via glycolysis.</text>
</comment>
<comment type="catalytic activity">
    <reaction evidence="1">
        <text>(2R)-2-phosphoglycerate = phosphoenolpyruvate + H2O</text>
        <dbReference type="Rhea" id="RHEA:10164"/>
        <dbReference type="ChEBI" id="CHEBI:15377"/>
        <dbReference type="ChEBI" id="CHEBI:58289"/>
        <dbReference type="ChEBI" id="CHEBI:58702"/>
        <dbReference type="EC" id="4.2.1.11"/>
    </reaction>
</comment>
<comment type="cofactor">
    <cofactor evidence="1">
        <name>Mg(2+)</name>
        <dbReference type="ChEBI" id="CHEBI:18420"/>
    </cofactor>
    <text evidence="1">Binds a second Mg(2+) ion via substrate during catalysis.</text>
</comment>
<comment type="pathway">
    <text evidence="1">Carbohydrate degradation; glycolysis; pyruvate from D-glyceraldehyde 3-phosphate: step 4/5.</text>
</comment>
<comment type="subcellular location">
    <subcellularLocation>
        <location evidence="1">Cytoplasm</location>
    </subcellularLocation>
    <subcellularLocation>
        <location evidence="1">Secreted</location>
    </subcellularLocation>
    <subcellularLocation>
        <location evidence="1">Cell surface</location>
    </subcellularLocation>
    <text evidence="1">Fractions of enolase are present in both the cytoplasm and on the cell surface.</text>
</comment>
<comment type="similarity">
    <text evidence="1">Belongs to the enolase family.</text>
</comment>
<accession>Q7VDY0</accession>
<reference key="1">
    <citation type="journal article" date="2003" name="Proc. Natl. Acad. Sci. U.S.A.">
        <title>Genome sequence of the cyanobacterium Prochlorococcus marinus SS120, a nearly minimal oxyphototrophic genome.</title>
        <authorList>
            <person name="Dufresne A."/>
            <person name="Salanoubat M."/>
            <person name="Partensky F."/>
            <person name="Artiguenave F."/>
            <person name="Axmann I.M."/>
            <person name="Barbe V."/>
            <person name="Duprat S."/>
            <person name="Galperin M.Y."/>
            <person name="Koonin E.V."/>
            <person name="Le Gall F."/>
            <person name="Makarova K.S."/>
            <person name="Ostrowski M."/>
            <person name="Oztas S."/>
            <person name="Robert C."/>
            <person name="Rogozin I.B."/>
            <person name="Scanlan D.J."/>
            <person name="Tandeau de Marsac N."/>
            <person name="Weissenbach J."/>
            <person name="Wincker P."/>
            <person name="Wolf Y.I."/>
            <person name="Hess W.R."/>
        </authorList>
    </citation>
    <scope>NUCLEOTIDE SEQUENCE [LARGE SCALE GENOMIC DNA]</scope>
    <source>
        <strain>SARG / CCMP1375 / SS120</strain>
    </source>
</reference>
<feature type="chain" id="PRO_0000133946" description="Enolase">
    <location>
        <begin position="1"/>
        <end position="432"/>
    </location>
</feature>
<feature type="active site" description="Proton donor" evidence="1">
    <location>
        <position position="209"/>
    </location>
</feature>
<feature type="active site" description="Proton acceptor" evidence="1">
    <location>
        <position position="339"/>
    </location>
</feature>
<feature type="binding site" evidence="1">
    <location>
        <position position="167"/>
    </location>
    <ligand>
        <name>(2R)-2-phosphoglycerate</name>
        <dbReference type="ChEBI" id="CHEBI:58289"/>
    </ligand>
</feature>
<feature type="binding site" evidence="1">
    <location>
        <position position="246"/>
    </location>
    <ligand>
        <name>Mg(2+)</name>
        <dbReference type="ChEBI" id="CHEBI:18420"/>
    </ligand>
</feature>
<feature type="binding site" evidence="1">
    <location>
        <position position="287"/>
    </location>
    <ligand>
        <name>Mg(2+)</name>
        <dbReference type="ChEBI" id="CHEBI:18420"/>
    </ligand>
</feature>
<feature type="binding site" evidence="1">
    <location>
        <position position="314"/>
    </location>
    <ligand>
        <name>Mg(2+)</name>
        <dbReference type="ChEBI" id="CHEBI:18420"/>
    </ligand>
</feature>
<feature type="binding site" evidence="1">
    <location>
        <position position="339"/>
    </location>
    <ligand>
        <name>(2R)-2-phosphoglycerate</name>
        <dbReference type="ChEBI" id="CHEBI:58289"/>
    </ligand>
</feature>
<feature type="binding site" evidence="1">
    <location>
        <position position="368"/>
    </location>
    <ligand>
        <name>(2R)-2-phosphoglycerate</name>
        <dbReference type="ChEBI" id="CHEBI:58289"/>
    </ligand>
</feature>
<feature type="binding site" evidence="1">
    <location>
        <position position="369"/>
    </location>
    <ligand>
        <name>(2R)-2-phosphoglycerate</name>
        <dbReference type="ChEBI" id="CHEBI:58289"/>
    </ligand>
</feature>
<feature type="binding site" evidence="1">
    <location>
        <position position="390"/>
    </location>
    <ligand>
        <name>(2R)-2-phosphoglycerate</name>
        <dbReference type="ChEBI" id="CHEBI:58289"/>
    </ligand>
</feature>
<organism>
    <name type="scientific">Prochlorococcus marinus (strain SARG / CCMP1375 / SS120)</name>
    <dbReference type="NCBI Taxonomy" id="167539"/>
    <lineage>
        <taxon>Bacteria</taxon>
        <taxon>Bacillati</taxon>
        <taxon>Cyanobacteriota</taxon>
        <taxon>Cyanophyceae</taxon>
        <taxon>Synechococcales</taxon>
        <taxon>Prochlorococcaceae</taxon>
        <taxon>Prochlorococcus</taxon>
    </lineage>
</organism>
<evidence type="ECO:0000255" key="1">
    <source>
        <dbReference type="HAMAP-Rule" id="MF_00318"/>
    </source>
</evidence>